<proteinExistence type="evidence at protein level"/>
<reference key="1">
    <citation type="journal article" date="2001" name="Proc. Natl. Acad. Sci. U.S.A.">
        <title>PAS kinase: an evolutionarily conserved PAS domain-regulated serine/threonine kinase.</title>
        <authorList>
            <person name="Rutter J."/>
            <person name="Michnoff C.H."/>
            <person name="Harper S.M."/>
            <person name="Gardner K.H."/>
            <person name="McKnight S.L."/>
        </authorList>
    </citation>
    <scope>NUCLEOTIDE SEQUENCE [MRNA] (ISOFORM 1)</scope>
    <scope>PHOSPHORYLATION AT THR-1161 AND THR-1165</scope>
    <scope>MUTAGENESIS OF LYS-1028; THR-1161 AND THR-1165</scope>
    <scope>VARIANT CYS-1266</scope>
    <source>
        <tissue>Cervix carcinoma</tissue>
    </source>
</reference>
<reference key="2">
    <citation type="journal article" date="1995" name="DNA Res.">
        <title>Prediction of the coding sequences of unidentified human genes. IV. The coding sequences of 40 new genes (KIAA0121-KIAA0160) deduced by analysis of cDNA clones from human cell line KG-1.</title>
        <authorList>
            <person name="Nagase T."/>
            <person name="Seki N."/>
            <person name="Tanaka A."/>
            <person name="Ishikawa K."/>
            <person name="Nomura N."/>
        </authorList>
    </citation>
    <scope>NUCLEOTIDE SEQUENCE [LARGE SCALE MRNA] (ISOFORM 2)</scope>
    <scope>VARIANTS MET-694 AND CYS-1266</scope>
    <source>
        <tissue>Bone marrow</tissue>
    </source>
</reference>
<reference key="3">
    <citation type="journal article" date="2002" name="DNA Res.">
        <title>Construction of expression-ready cDNA clones for KIAA genes: manual curation of 330 KIAA cDNA clones.</title>
        <authorList>
            <person name="Nakajima D."/>
            <person name="Okazaki N."/>
            <person name="Yamakawa H."/>
            <person name="Kikuno R."/>
            <person name="Ohara O."/>
            <person name="Nagase T."/>
        </authorList>
    </citation>
    <scope>SEQUENCE REVISION</scope>
</reference>
<reference key="4">
    <citation type="journal article" date="2007" name="BMC Genomics">
        <title>The full-ORF clone resource of the German cDNA consortium.</title>
        <authorList>
            <person name="Bechtel S."/>
            <person name="Rosenfelder H."/>
            <person name="Duda A."/>
            <person name="Schmidt C.P."/>
            <person name="Ernst U."/>
            <person name="Wellenreuther R."/>
            <person name="Mehrle A."/>
            <person name="Schuster C."/>
            <person name="Bahr A."/>
            <person name="Bloecker H."/>
            <person name="Heubner D."/>
            <person name="Hoerlein A."/>
            <person name="Michel G."/>
            <person name="Wedler H."/>
            <person name="Koehrer K."/>
            <person name="Ottenwaelder B."/>
            <person name="Poustka A."/>
            <person name="Wiemann S."/>
            <person name="Schupp I."/>
        </authorList>
    </citation>
    <scope>NUCLEOTIDE SEQUENCE [LARGE SCALE MRNA] (ISOFORM 1)</scope>
    <source>
        <tissue>Testis</tissue>
    </source>
</reference>
<reference key="5">
    <citation type="journal article" date="2005" name="Nature">
        <title>Generation and annotation of the DNA sequences of human chromosomes 2 and 4.</title>
        <authorList>
            <person name="Hillier L.W."/>
            <person name="Graves T.A."/>
            <person name="Fulton R.S."/>
            <person name="Fulton L.A."/>
            <person name="Pepin K.H."/>
            <person name="Minx P."/>
            <person name="Wagner-McPherson C."/>
            <person name="Layman D."/>
            <person name="Wylie K."/>
            <person name="Sekhon M."/>
            <person name="Becker M.C."/>
            <person name="Fewell G.A."/>
            <person name="Delehaunty K.D."/>
            <person name="Miner T.L."/>
            <person name="Nash W.E."/>
            <person name="Kremitzki C."/>
            <person name="Oddy L."/>
            <person name="Du H."/>
            <person name="Sun H."/>
            <person name="Bradshaw-Cordum H."/>
            <person name="Ali J."/>
            <person name="Carter J."/>
            <person name="Cordes M."/>
            <person name="Harris A."/>
            <person name="Isak A."/>
            <person name="van Brunt A."/>
            <person name="Nguyen C."/>
            <person name="Du F."/>
            <person name="Courtney L."/>
            <person name="Kalicki J."/>
            <person name="Ozersky P."/>
            <person name="Abbott S."/>
            <person name="Armstrong J."/>
            <person name="Belter E.A."/>
            <person name="Caruso L."/>
            <person name="Cedroni M."/>
            <person name="Cotton M."/>
            <person name="Davidson T."/>
            <person name="Desai A."/>
            <person name="Elliott G."/>
            <person name="Erb T."/>
            <person name="Fronick C."/>
            <person name="Gaige T."/>
            <person name="Haakenson W."/>
            <person name="Haglund K."/>
            <person name="Holmes A."/>
            <person name="Harkins R."/>
            <person name="Kim K."/>
            <person name="Kruchowski S.S."/>
            <person name="Strong C.M."/>
            <person name="Grewal N."/>
            <person name="Goyea E."/>
            <person name="Hou S."/>
            <person name="Levy A."/>
            <person name="Martinka S."/>
            <person name="Mead K."/>
            <person name="McLellan M.D."/>
            <person name="Meyer R."/>
            <person name="Randall-Maher J."/>
            <person name="Tomlinson C."/>
            <person name="Dauphin-Kohlberg S."/>
            <person name="Kozlowicz-Reilly A."/>
            <person name="Shah N."/>
            <person name="Swearengen-Shahid S."/>
            <person name="Snider J."/>
            <person name="Strong J.T."/>
            <person name="Thompson J."/>
            <person name="Yoakum M."/>
            <person name="Leonard S."/>
            <person name="Pearman C."/>
            <person name="Trani L."/>
            <person name="Radionenko M."/>
            <person name="Waligorski J.E."/>
            <person name="Wang C."/>
            <person name="Rock S.M."/>
            <person name="Tin-Wollam A.-M."/>
            <person name="Maupin R."/>
            <person name="Latreille P."/>
            <person name="Wendl M.C."/>
            <person name="Yang S.-P."/>
            <person name="Pohl C."/>
            <person name="Wallis J.W."/>
            <person name="Spieth J."/>
            <person name="Bieri T.A."/>
            <person name="Berkowicz N."/>
            <person name="Nelson J.O."/>
            <person name="Osborne J."/>
            <person name="Ding L."/>
            <person name="Meyer R."/>
            <person name="Sabo A."/>
            <person name="Shotland Y."/>
            <person name="Sinha P."/>
            <person name="Wohldmann P.E."/>
            <person name="Cook L.L."/>
            <person name="Hickenbotham M.T."/>
            <person name="Eldred J."/>
            <person name="Williams D."/>
            <person name="Jones T.A."/>
            <person name="She X."/>
            <person name="Ciccarelli F.D."/>
            <person name="Izaurralde E."/>
            <person name="Taylor J."/>
            <person name="Schmutz J."/>
            <person name="Myers R.M."/>
            <person name="Cox D.R."/>
            <person name="Huang X."/>
            <person name="McPherson J.D."/>
            <person name="Mardis E.R."/>
            <person name="Clifton S.W."/>
            <person name="Warren W.C."/>
            <person name="Chinwalla A.T."/>
            <person name="Eddy S.R."/>
            <person name="Marra M.A."/>
            <person name="Ovcharenko I."/>
            <person name="Furey T.S."/>
            <person name="Miller W."/>
            <person name="Eichler E.E."/>
            <person name="Bork P."/>
            <person name="Suyama M."/>
            <person name="Torrents D."/>
            <person name="Waterston R.H."/>
            <person name="Wilson R.K."/>
        </authorList>
    </citation>
    <scope>NUCLEOTIDE SEQUENCE [LARGE SCALE GENOMIC DNA]</scope>
</reference>
<reference key="6">
    <citation type="submission" date="2005-07" db="EMBL/GenBank/DDBJ databases">
        <authorList>
            <person name="Mural R.J."/>
            <person name="Istrail S."/>
            <person name="Sutton G."/>
            <person name="Florea L."/>
            <person name="Halpern A.L."/>
            <person name="Mobarry C.M."/>
            <person name="Lippert R."/>
            <person name="Walenz B."/>
            <person name="Shatkay H."/>
            <person name="Dew I."/>
            <person name="Miller J.R."/>
            <person name="Flanigan M.J."/>
            <person name="Edwards N.J."/>
            <person name="Bolanos R."/>
            <person name="Fasulo D."/>
            <person name="Halldorsson B.V."/>
            <person name="Hannenhalli S."/>
            <person name="Turner R."/>
            <person name="Yooseph S."/>
            <person name="Lu F."/>
            <person name="Nusskern D.R."/>
            <person name="Shue B.C."/>
            <person name="Zheng X.H."/>
            <person name="Zhong F."/>
            <person name="Delcher A.L."/>
            <person name="Huson D.H."/>
            <person name="Kravitz S.A."/>
            <person name="Mouchard L."/>
            <person name="Reinert K."/>
            <person name="Remington K.A."/>
            <person name="Clark A.G."/>
            <person name="Waterman M.S."/>
            <person name="Eichler E.E."/>
            <person name="Adams M.D."/>
            <person name="Hunkapiller M.W."/>
            <person name="Myers E.W."/>
            <person name="Venter J.C."/>
        </authorList>
    </citation>
    <scope>NUCLEOTIDE SEQUENCE [LARGE SCALE GENOMIC DNA]</scope>
</reference>
<reference key="7">
    <citation type="journal article" date="2004" name="Genome Res.">
        <title>The status, quality, and expansion of the NIH full-length cDNA project: the Mammalian Gene Collection (MGC).</title>
        <authorList>
            <consortium name="The MGC Project Team"/>
        </authorList>
    </citation>
    <scope>NUCLEOTIDE SEQUENCE [LARGE SCALE MRNA] (ISOFORMS 1 AND 3)</scope>
    <scope>VARIANT ILE-250</scope>
    <source>
        <tissue>Eye</tissue>
        <tissue>Lymph</tissue>
        <tissue>Testis</tissue>
    </source>
</reference>
<reference key="8">
    <citation type="journal article" date="1997" name="Genome Res.">
        <title>Large-scale concatenation cDNA sequencing.</title>
        <authorList>
            <person name="Yu W."/>
            <person name="Andersson B."/>
            <person name="Worley K.C."/>
            <person name="Muzny D.M."/>
            <person name="Ding Y."/>
            <person name="Liu W."/>
            <person name="Ricafrente J.Y."/>
            <person name="Wentland M.A."/>
            <person name="Lennon G."/>
            <person name="Gibbs R.A."/>
        </authorList>
    </citation>
    <scope>NUCLEOTIDE SEQUENCE [LARGE SCALE MRNA] OF 866-1323 (ISOFORM 1)</scope>
    <source>
        <tissue>Brain</tissue>
    </source>
</reference>
<reference key="9">
    <citation type="journal article" date="2005" name="Proc. Natl. Acad. Sci. U.S.A.">
        <title>Control of mammalian glycogen synthase by PAS kinase.</title>
        <authorList>
            <person name="Wilson W.A."/>
            <person name="Skurat A.V."/>
            <person name="Probst B."/>
            <person name="de Paoli-Roach A."/>
            <person name="Roach P.J."/>
            <person name="Rutter J."/>
        </authorList>
    </citation>
    <scope>FUNCTION IN PHOSPHORYLATION OF GYS1</scope>
</reference>
<reference key="10">
    <citation type="journal article" date="2006" name="Biochem. Soc. Trans.">
        <title>Regulation by Per-Arnt-Sim (PAS) kinase of pancreatic duodenal homeobox-1 nuclear import in pancreatic beta-cells.</title>
        <authorList>
            <person name="An R."/>
            <person name="da Silva Xavier G."/>
            <person name="Hao H.X."/>
            <person name="Semplici F."/>
            <person name="Rutter J."/>
            <person name="Rutter G.A."/>
        </authorList>
    </citation>
    <scope>FUNCTION IN PHOSPHORYLATION OF PDX1</scope>
</reference>
<reference key="11">
    <citation type="journal article" date="2007" name="Cell. Physiol. Biochem.">
        <title>Male germ cell expression of the PAS domain kinase PASKIN and its novel target eukaryotic translation elongation factor eEF1A1.</title>
        <authorList>
            <person name="Eckhardt K."/>
            <person name="Troger J."/>
            <person name="Reissmann J."/>
            <person name="Katschinski D.M."/>
            <person name="Wagner K.F."/>
            <person name="Stengel P."/>
            <person name="Paasch U."/>
            <person name="Hunziker P."/>
            <person name="Borter E."/>
            <person name="Barth S."/>
            <person name="Schlafli P."/>
            <person name="Spielmann P."/>
            <person name="Stiehl D.P."/>
            <person name="Camenisch G."/>
            <person name="Wenger R.H."/>
        </authorList>
    </citation>
    <scope>FUNCTION IN PHOSPHORYLATION OF EEF1A1</scope>
    <scope>AUTOPHOSPHORYLATION</scope>
    <scope>SUBCELLULAR LOCATION</scope>
    <scope>MUTAGENESIS OF THR-1161 AND THR-1165</scope>
</reference>
<reference key="12">
    <citation type="journal article" date="2008" name="Proc. Natl. Acad. Sci. U.S.A.">
        <title>A quantitative atlas of mitotic phosphorylation.</title>
        <authorList>
            <person name="Dephoure N."/>
            <person name="Zhou C."/>
            <person name="Villen J."/>
            <person name="Beausoleil S.A."/>
            <person name="Bakalarski C.E."/>
            <person name="Elledge S.J."/>
            <person name="Gygi S.P."/>
        </authorList>
    </citation>
    <scope>IDENTIFICATION BY MASS SPECTROMETRY [LARGE SCALE ANALYSIS]</scope>
    <source>
        <tissue>Cervix carcinoma</tissue>
    </source>
</reference>
<reference key="13">
    <citation type="journal article" date="2009" name="Sci. Signal.">
        <title>Quantitative phosphoproteomic analysis of T cell receptor signaling reveals system-wide modulation of protein-protein interactions.</title>
        <authorList>
            <person name="Mayya V."/>
            <person name="Lundgren D.H."/>
            <person name="Hwang S.-I."/>
            <person name="Rezaul K."/>
            <person name="Wu L."/>
            <person name="Eng J.K."/>
            <person name="Rodionov V."/>
            <person name="Han D.K."/>
        </authorList>
    </citation>
    <scope>IDENTIFICATION BY MASS SPECTROMETRY [LARGE SCALE ANALYSIS]</scope>
    <source>
        <tissue>Leukemic T-cell</tissue>
    </source>
</reference>
<reference key="14">
    <citation type="journal article" date="2011" name="Diabetologia">
        <title>Per-arnt-sim (PAS) domain-containing protein kinase is downregulated in human islets in type 2 diabetes and regulates glucagon secretion.</title>
        <authorList>
            <person name="da Silva Xavier G."/>
            <person name="Farhan H."/>
            <person name="Kim H."/>
            <person name="Caxaria S."/>
            <person name="Johnson P."/>
            <person name="Hughes S."/>
            <person name="Bugliani M."/>
            <person name="Marselli L."/>
            <person name="Marchetti P."/>
            <person name="Birzele F."/>
            <person name="Sun G."/>
            <person name="Scharfmann R."/>
            <person name="Rutter J."/>
            <person name="Siniakowicz K."/>
            <person name="Weir G."/>
            <person name="Parker H."/>
            <person name="Reimann F."/>
            <person name="Gribble F.M."/>
            <person name="Rutter G.A."/>
        </authorList>
    </citation>
    <scope>FUNCTION</scope>
</reference>
<reference key="15">
    <citation type="journal article" date="2011" name="FEBS J.">
        <title>Substrate preference and phosphatidylinositol monophosphate inhibition of the catalytic domain of the Per-Arnt-Sim domain kinase PASKIN.</title>
        <authorList>
            <person name="Schlafli P."/>
            <person name="Troger J."/>
            <person name="Eckhardt K."/>
            <person name="Borter E."/>
            <person name="Spielmann P."/>
            <person name="Wenger R.H."/>
        </authorList>
    </citation>
    <scope>FUNCTION IN PHOSPHORYLATION OF RPS6</scope>
    <scope>ACTIVITY REGULATION</scope>
    <scope>DOMAIN PROTEIN KINASE</scope>
    <scope>AUTOPHOSPHORYLATION</scope>
    <scope>LIPID-BINDING</scope>
</reference>
<reference key="16">
    <citation type="journal article" date="2009" name="Cell. Mol. Life Sci.">
        <title>The PAS-domain kinase PASKIN: a new sensor in energy homeostasis.</title>
        <authorList>
            <person name="Schlafli P."/>
            <person name="Borter E."/>
            <person name="Spielmann P."/>
            <person name="Wenger R.H."/>
        </authorList>
    </citation>
    <scope>REVIEW ON FUNCTION</scope>
</reference>
<reference key="17">
    <citation type="journal article" date="2012" name="Proc. Natl. Acad. Sci. U.S.A.">
        <title>N-terminal acetylome analyses and functional insights of the N-terminal acetyltransferase NatB.</title>
        <authorList>
            <person name="Van Damme P."/>
            <person name="Lasa M."/>
            <person name="Polevoda B."/>
            <person name="Gazquez C."/>
            <person name="Elosegui-Artola A."/>
            <person name="Kim D.S."/>
            <person name="De Juan-Pardo E."/>
            <person name="Demeyer K."/>
            <person name="Hole K."/>
            <person name="Larrea E."/>
            <person name="Timmerman E."/>
            <person name="Prieto J."/>
            <person name="Arnesen T."/>
            <person name="Sherman F."/>
            <person name="Gevaert K."/>
            <person name="Aldabe R."/>
        </authorList>
    </citation>
    <scope>ACETYLATION [LARGE SCALE ANALYSIS] AT MET-1</scope>
    <scope>IDENTIFICATION BY MASS SPECTROMETRY [LARGE SCALE ANALYSIS]</scope>
</reference>
<reference key="18">
    <citation type="journal article" date="2013" name="J. Proteome Res.">
        <title>Toward a comprehensive characterization of a human cancer cell phosphoproteome.</title>
        <authorList>
            <person name="Zhou H."/>
            <person name="Di Palma S."/>
            <person name="Preisinger C."/>
            <person name="Peng M."/>
            <person name="Polat A.N."/>
            <person name="Heck A.J."/>
            <person name="Mohammed S."/>
        </authorList>
    </citation>
    <scope>PHOSPHORYLATION [LARGE SCALE ANALYSIS] AT SER-582 AND SER-939</scope>
    <scope>IDENTIFICATION BY MASS SPECTROMETRY [LARGE SCALE ANALYSIS]</scope>
    <source>
        <tissue>Cervix carcinoma</tissue>
        <tissue>Erythroleukemia</tissue>
    </source>
</reference>
<reference key="19">
    <citation type="journal article" date="2002" name="Structure">
        <title>Structure and interactions of PAS kinase N-terminal PAS domain: model for intramolecular kinase regulation.</title>
        <authorList>
            <person name="Amezcua C.A."/>
            <person name="Harper S.M."/>
            <person name="Rutter J."/>
            <person name="Gardner K.H."/>
        </authorList>
    </citation>
    <scope>STRUCTURE BY NMR OF 131-237</scope>
</reference>
<reference key="20">
    <citation type="journal article" date="2010" name="J. Biol. Chem.">
        <title>Structural bases of PAS domain-regulated kinase (PASK) activation in the absence of activation loop phosphorylation.</title>
        <authorList>
            <person name="Kikani C.K."/>
            <person name="Antonysamy S.A."/>
            <person name="Bonanno J.B."/>
            <person name="Romero R."/>
            <person name="Zhang F.F."/>
            <person name="Russell M."/>
            <person name="Gheyi T."/>
            <person name="Iizuka M."/>
            <person name="Emtage S."/>
            <person name="Sauder J.M."/>
            <person name="Turk B.E."/>
            <person name="Burley S.K."/>
            <person name="Rutter J."/>
        </authorList>
    </citation>
    <scope>X-RAY CRYSTALLOGRAPHY (2.3 ANGSTROMS) OF 977-1300 IN COMPLEX WITH ADP</scope>
    <scope>AUTOPHOSPHORYLATION</scope>
    <scope>FUNCTION</scope>
    <scope>MUTAGENESIS OF LYS-1028; ARG-1058; ALA-1151; TYR-1152 AND THR-1161</scope>
</reference>
<reference key="21">
    <citation type="journal article" date="2007" name="Nature">
        <title>Patterns of somatic mutation in human cancer genomes.</title>
        <authorList>
            <person name="Greenman C."/>
            <person name="Stephens P."/>
            <person name="Smith R."/>
            <person name="Dalgliesh G.L."/>
            <person name="Hunter C."/>
            <person name="Bignell G."/>
            <person name="Davies H."/>
            <person name="Teague J."/>
            <person name="Butler A."/>
            <person name="Stevens C."/>
            <person name="Edkins S."/>
            <person name="O'Meara S."/>
            <person name="Vastrik I."/>
            <person name="Schmidt E.E."/>
            <person name="Avis T."/>
            <person name="Barthorpe S."/>
            <person name="Bhamra G."/>
            <person name="Buck G."/>
            <person name="Choudhury B."/>
            <person name="Clements J."/>
            <person name="Cole J."/>
            <person name="Dicks E."/>
            <person name="Forbes S."/>
            <person name="Gray K."/>
            <person name="Halliday K."/>
            <person name="Harrison R."/>
            <person name="Hills K."/>
            <person name="Hinton J."/>
            <person name="Jenkinson A."/>
            <person name="Jones D."/>
            <person name="Menzies A."/>
            <person name="Mironenko T."/>
            <person name="Perry J."/>
            <person name="Raine K."/>
            <person name="Richardson D."/>
            <person name="Shepherd R."/>
            <person name="Small A."/>
            <person name="Tofts C."/>
            <person name="Varian J."/>
            <person name="Webb T."/>
            <person name="West S."/>
            <person name="Widaa S."/>
            <person name="Yates A."/>
            <person name="Cahill D.P."/>
            <person name="Louis D.N."/>
            <person name="Goldstraw P."/>
            <person name="Nicholson A.G."/>
            <person name="Brasseur F."/>
            <person name="Looijenga L."/>
            <person name="Weber B.L."/>
            <person name="Chiew Y.-E."/>
            <person name="DeFazio A."/>
            <person name="Greaves M.F."/>
            <person name="Green A.R."/>
            <person name="Campbell P."/>
            <person name="Birney E."/>
            <person name="Easton D.F."/>
            <person name="Chenevix-Trench G."/>
            <person name="Tan M.-H."/>
            <person name="Khoo S.K."/>
            <person name="Teh B.T."/>
            <person name="Yuen S.T."/>
            <person name="Leung S.Y."/>
            <person name="Wooster R."/>
            <person name="Futreal P.A."/>
            <person name="Stratton M.R."/>
        </authorList>
    </citation>
    <scope>VARIANTS [LARGE SCALE ANALYSIS] LYS-11; ILE-250; ARG-426; ALA-512; SER-514; ARG-684; ASP-725; LYS-796; GLN-844; HIS-937; MET-1210; CYS-1266 AND SER-1301</scope>
</reference>
<organism>
    <name type="scientific">Homo sapiens</name>
    <name type="common">Human</name>
    <dbReference type="NCBI Taxonomy" id="9606"/>
    <lineage>
        <taxon>Eukaryota</taxon>
        <taxon>Metazoa</taxon>
        <taxon>Chordata</taxon>
        <taxon>Craniata</taxon>
        <taxon>Vertebrata</taxon>
        <taxon>Euteleostomi</taxon>
        <taxon>Mammalia</taxon>
        <taxon>Eutheria</taxon>
        <taxon>Euarchontoglires</taxon>
        <taxon>Primates</taxon>
        <taxon>Haplorrhini</taxon>
        <taxon>Catarrhini</taxon>
        <taxon>Hominidae</taxon>
        <taxon>Homo</taxon>
    </lineage>
</organism>
<evidence type="ECO:0000250" key="1">
    <source>
        <dbReference type="UniProtKB" id="Q8CEE6"/>
    </source>
</evidence>
<evidence type="ECO:0000255" key="2">
    <source>
        <dbReference type="PROSITE-ProRule" id="PRU00140"/>
    </source>
</evidence>
<evidence type="ECO:0000255" key="3">
    <source>
        <dbReference type="PROSITE-ProRule" id="PRU00159"/>
    </source>
</evidence>
<evidence type="ECO:0000256" key="4">
    <source>
        <dbReference type="SAM" id="MobiDB-lite"/>
    </source>
</evidence>
<evidence type="ECO:0000269" key="5">
    <source>
    </source>
</evidence>
<evidence type="ECO:0000269" key="6">
    <source>
    </source>
</evidence>
<evidence type="ECO:0000269" key="7">
    <source>
    </source>
</evidence>
<evidence type="ECO:0000269" key="8">
    <source>
    </source>
</evidence>
<evidence type="ECO:0000269" key="9">
    <source>
    </source>
</evidence>
<evidence type="ECO:0000269" key="10">
    <source>
    </source>
</evidence>
<evidence type="ECO:0000269" key="11">
    <source>
    </source>
</evidence>
<evidence type="ECO:0000269" key="12">
    <source>
    </source>
</evidence>
<evidence type="ECO:0000269" key="13">
    <source>
    </source>
</evidence>
<evidence type="ECO:0000269" key="14">
    <source>
    </source>
</evidence>
<evidence type="ECO:0000303" key="15">
    <source>
    </source>
</evidence>
<evidence type="ECO:0000303" key="16">
    <source>
    </source>
</evidence>
<evidence type="ECO:0000305" key="17"/>
<evidence type="ECO:0007744" key="18">
    <source>
    </source>
</evidence>
<evidence type="ECO:0007744" key="19">
    <source>
    </source>
</evidence>
<evidence type="ECO:0007829" key="20">
    <source>
        <dbReference type="PDB" id="1LL8"/>
    </source>
</evidence>
<evidence type="ECO:0007829" key="21">
    <source>
        <dbReference type="PDB" id="3DLS"/>
    </source>
</evidence>
<keyword id="KW-0002">3D-structure</keyword>
<keyword id="KW-0007">Acetylation</keyword>
<keyword id="KW-0025">Alternative splicing</keyword>
<keyword id="KW-0067">ATP-binding</keyword>
<keyword id="KW-0963">Cytoplasm</keyword>
<keyword id="KW-0418">Kinase</keyword>
<keyword id="KW-0446">Lipid-binding</keyword>
<keyword id="KW-0547">Nucleotide-binding</keyword>
<keyword id="KW-0539">Nucleus</keyword>
<keyword id="KW-0597">Phosphoprotein</keyword>
<keyword id="KW-1267">Proteomics identification</keyword>
<keyword id="KW-1185">Reference proteome</keyword>
<keyword id="KW-0677">Repeat</keyword>
<keyword id="KW-0723">Serine/threonine-protein kinase</keyword>
<keyword id="KW-0808">Transferase</keyword>
<protein>
    <recommendedName>
        <fullName>PAS domain-containing serine/threonine-protein kinase</fullName>
        <shortName>PAS-kinase</shortName>
        <shortName>PASKIN</shortName>
        <shortName>hPASK</shortName>
        <ecNumber>2.7.11.1</ecNumber>
    </recommendedName>
</protein>
<feature type="chain" id="PRO_0000086480" description="PAS domain-containing serine/threonine-protein kinase">
    <location>
        <begin position="1"/>
        <end position="1323"/>
    </location>
</feature>
<feature type="domain" description="PAS 1" evidence="2">
    <location>
        <begin position="119"/>
        <end position="190"/>
    </location>
</feature>
<feature type="domain" description="PAS 2" evidence="2">
    <location>
        <begin position="335"/>
        <end position="402"/>
    </location>
</feature>
<feature type="domain" description="Protein kinase" evidence="3">
    <location>
        <begin position="999"/>
        <end position="1251"/>
    </location>
</feature>
<feature type="region of interest" description="Disordered" evidence="4">
    <location>
        <begin position="20"/>
        <end position="47"/>
    </location>
</feature>
<feature type="region of interest" description="Disordered" evidence="4">
    <location>
        <begin position="837"/>
        <end position="857"/>
    </location>
</feature>
<feature type="region of interest" description="Disordered" evidence="4">
    <location>
        <begin position="1298"/>
        <end position="1323"/>
    </location>
</feature>
<feature type="compositionally biased region" description="Polar residues" evidence="4">
    <location>
        <begin position="31"/>
        <end position="43"/>
    </location>
</feature>
<feature type="active site" description="Proton acceptor">
    <location>
        <position position="1128"/>
    </location>
</feature>
<feature type="binding site">
    <location>
        <begin position="1005"/>
        <end position="1013"/>
    </location>
    <ligand>
        <name>ATP</name>
        <dbReference type="ChEBI" id="CHEBI:30616"/>
    </ligand>
</feature>
<feature type="binding site">
    <location>
        <position position="1028"/>
    </location>
    <ligand>
        <name>ATP</name>
        <dbReference type="ChEBI" id="CHEBI:30616"/>
    </ligand>
</feature>
<feature type="binding site">
    <location>
        <begin position="1082"/>
        <end position="1089"/>
    </location>
    <ligand>
        <name>ATP</name>
        <dbReference type="ChEBI" id="CHEBI:30616"/>
    </ligand>
</feature>
<feature type="binding site">
    <location>
        <position position="1146"/>
    </location>
    <ligand>
        <name>ATP</name>
        <dbReference type="ChEBI" id="CHEBI:30616"/>
    </ligand>
</feature>
<feature type="modified residue" description="N-acetylmethionine" evidence="18">
    <location>
        <position position="1"/>
    </location>
</feature>
<feature type="modified residue" description="Phosphoserine" evidence="1">
    <location>
        <position position="19"/>
    </location>
</feature>
<feature type="modified residue" description="Phosphothreonine" evidence="1">
    <location>
        <position position="34"/>
    </location>
</feature>
<feature type="modified residue" description="Phosphoserine" evidence="19">
    <location>
        <position position="582"/>
    </location>
</feature>
<feature type="modified residue" description="Phosphoserine" evidence="19">
    <location>
        <position position="939"/>
    </location>
</feature>
<feature type="modified residue" description="Phosphothreonine; by autocatalysis" evidence="5">
    <location>
        <position position="1161"/>
    </location>
</feature>
<feature type="modified residue" description="Phosphothreonine; by autocatalysis" evidence="5">
    <location>
        <position position="1165"/>
    </location>
</feature>
<feature type="splice variant" id="VSP_009302" description="In isoform 2." evidence="16">
    <original>Q</original>
    <variation>QVRAGQSR</variation>
    <location>
        <position position="1111"/>
    </location>
</feature>
<feature type="splice variant" id="VSP_045543" description="In isoform 3." evidence="15">
    <original>LVSAVGYLRLKDIIHRDIKDENIVIAEDFTIK</original>
    <variation>VRAGQSRVSVNAGLGAWVRWLQRSVIHTRFSL</variation>
    <location>
        <begin position="1112"/>
        <end position="1143"/>
    </location>
</feature>
<feature type="splice variant" id="VSP_045544" description="In isoform 3." evidence="15">
    <location>
        <begin position="1144"/>
        <end position="1323"/>
    </location>
</feature>
<feature type="sequence variant" id="VAR_040986" description="In a metastatic melanoma sample; somatic mutation; dbSNP:rs1277219458." evidence="9">
    <original>E</original>
    <variation>K</variation>
    <location>
        <position position="11"/>
    </location>
</feature>
<feature type="sequence variant" id="VAR_028293" description="In dbSNP:rs1470414." evidence="6 9">
    <original>V</original>
    <variation>I</variation>
    <location>
        <position position="250"/>
    </location>
</feature>
<feature type="sequence variant" id="VAR_040987" description="In dbSNP:rs35187712." evidence="9">
    <original>Q</original>
    <variation>R</variation>
    <location>
        <position position="426"/>
    </location>
</feature>
<feature type="sequence variant" id="VAR_040988" description="In dbSNP:rs56033464." evidence="9">
    <original>T</original>
    <variation>A</variation>
    <location>
        <position position="512"/>
    </location>
</feature>
<feature type="sequence variant" id="VAR_028294" description="In dbSNP:rs2240543." evidence="9">
    <original>L</original>
    <variation>S</variation>
    <location>
        <position position="514"/>
    </location>
</feature>
<feature type="sequence variant" id="VAR_040989" description="In dbSNP:rs56372985." evidence="9">
    <original>P</original>
    <variation>R</variation>
    <location>
        <position position="684"/>
    </location>
</feature>
<feature type="sequence variant" id="VAR_028295" description="In dbSNP:rs6727226." evidence="14">
    <original>V</original>
    <variation>M</variation>
    <location>
        <position position="694"/>
    </location>
</feature>
<feature type="sequence variant" id="VAR_028296" description="In dbSNP:rs2005771." evidence="9">
    <original>G</original>
    <variation>D</variation>
    <location>
        <position position="725"/>
    </location>
</feature>
<feature type="sequence variant" id="VAR_040990" description="In dbSNP:rs35129131." evidence="9">
    <original>E</original>
    <variation>K</variation>
    <location>
        <position position="796"/>
    </location>
</feature>
<feature type="sequence variant" id="VAR_040991" description="In dbSNP:rs36082918." evidence="9">
    <original>P</original>
    <variation>Q</variation>
    <location>
        <position position="844"/>
    </location>
</feature>
<feature type="sequence variant" id="VAR_040992" description="In dbSNP:rs56139954." evidence="9">
    <original>R</original>
    <variation>H</variation>
    <location>
        <position position="937"/>
    </location>
</feature>
<feature type="sequence variant" id="VAR_028297" description="In dbSNP:rs10167000." evidence="9">
    <original>V</original>
    <variation>M</variation>
    <location>
        <position position="1210"/>
    </location>
</feature>
<feature type="sequence variant" id="VAR_028298" description="In dbSNP:rs1131293." evidence="5 9 14">
    <original>F</original>
    <variation>C</variation>
    <location>
        <position position="1266"/>
    </location>
</feature>
<feature type="sequence variant" id="VAR_040993" evidence="9">
    <original>P</original>
    <variation>S</variation>
    <location>
        <position position="1301"/>
    </location>
</feature>
<feature type="mutagenesis site" description="Loss of autophosphorylating activity." evidence="5 11">
    <original>K</original>
    <variation>R</variation>
    <location>
        <position position="1028"/>
    </location>
</feature>
<feature type="mutagenesis site" description="Induces lower protein kinase activity." evidence="11">
    <original>R</original>
    <variation>A</variation>
    <location>
        <position position="1058"/>
    </location>
</feature>
<feature type="mutagenesis site" description="Does not affect protein kinase activity." evidence="11">
    <original>R</original>
    <variation>K</variation>
    <location>
        <position position="1058"/>
    </location>
</feature>
<feature type="mutagenesis site" description="Induces lower protein kinase activity and ability to autophosphorylate." evidence="11">
    <original>A</original>
    <variation>K</variation>
    <location>
        <position position="1151"/>
    </location>
</feature>
<feature type="mutagenesis site" description="Induces lower protein kinase activity." evidence="11">
    <original>Y</original>
    <variation>F</variation>
    <location>
        <position position="1152"/>
    </location>
</feature>
<feature type="mutagenesis site" description="Loss of catalytic activity (PubMed:11459942). According to another report, does not affect the protein kinase activity (PubMed:20943661). Does not affect protein translation." evidence="5 10 11">
    <original>T</original>
    <variation>A</variation>
    <location>
        <position position="1161"/>
    </location>
</feature>
<feature type="mutagenesis site" description="Loss of catalytic activity. Does not affect protein translation." evidence="5 10">
    <original>T</original>
    <variation>A</variation>
    <location>
        <position position="1165"/>
    </location>
</feature>
<feature type="sequence conflict" description="In Ref. 2; BAA09484." evidence="17" ref="2">
    <original>S</original>
    <variation>T</variation>
    <location>
        <position position="205"/>
    </location>
</feature>
<feature type="sequence conflict" description="In Ref. 4; CAH18087." evidence="17" ref="4">
    <original>S</original>
    <variation>C</variation>
    <location>
        <position position="407"/>
    </location>
</feature>
<feature type="sequence conflict" description="In Ref. 2; BAA09484." evidence="17" ref="2">
    <original>S</original>
    <variation>R</variation>
    <location>
        <position position="623"/>
    </location>
</feature>
<feature type="sequence conflict" description="In Ref. 4; CAH18087." evidence="17" ref="4">
    <original>W</original>
    <variation>R</variation>
    <location>
        <position position="741"/>
    </location>
</feature>
<feature type="sequence conflict" description="In Ref. 2; BAA09484." evidence="17" ref="2">
    <original>T</original>
    <variation>M</variation>
    <location>
        <position position="850"/>
    </location>
</feature>
<feature type="sequence conflict" description="In Ref. 1; AAK69752." evidence="17" ref="1">
    <original>Y</original>
    <variation>H</variation>
    <location>
        <position position="899"/>
    </location>
</feature>
<feature type="sequence conflict" description="In Ref. 4; CAH18087." evidence="17" ref="4">
    <original>K</original>
    <variation>E</variation>
    <location>
        <position position="1048"/>
    </location>
</feature>
<feature type="sequence conflict" description="In Ref. 7; AAH50565." evidence="17" ref="7">
    <original>A</original>
    <variation>S</variation>
    <location>
        <position position="1062"/>
    </location>
</feature>
<feature type="sequence conflict" description="In Ref. 8; AAB50198." evidence="17" ref="8">
    <original>I</original>
    <variation>F</variation>
    <location>
        <position position="1129"/>
    </location>
</feature>
<feature type="strand" evidence="20">
    <location>
        <begin position="133"/>
        <end position="141"/>
    </location>
</feature>
<feature type="strand" evidence="20">
    <location>
        <begin position="144"/>
        <end position="147"/>
    </location>
</feature>
<feature type="helix" evidence="20">
    <location>
        <begin position="151"/>
        <end position="155"/>
    </location>
</feature>
<feature type="turn" evidence="20">
    <location>
        <begin position="159"/>
        <end position="161"/>
    </location>
</feature>
<feature type="helix" evidence="20">
    <location>
        <begin position="167"/>
        <end position="170"/>
    </location>
</feature>
<feature type="turn" evidence="20">
    <location>
        <begin position="174"/>
        <end position="176"/>
    </location>
</feature>
<feature type="helix" evidence="20">
    <location>
        <begin position="177"/>
        <end position="181"/>
    </location>
</feature>
<feature type="turn" evidence="20">
    <location>
        <begin position="182"/>
        <end position="184"/>
    </location>
</feature>
<feature type="strand" evidence="20">
    <location>
        <begin position="188"/>
        <end position="191"/>
    </location>
</feature>
<feature type="strand" evidence="20">
    <location>
        <begin position="193"/>
        <end position="195"/>
    </location>
</feature>
<feature type="strand" evidence="20">
    <location>
        <begin position="198"/>
        <end position="203"/>
    </location>
</feature>
<feature type="strand" evidence="20">
    <location>
        <begin position="211"/>
        <end position="214"/>
    </location>
</feature>
<feature type="strand" evidence="20">
    <location>
        <begin position="217"/>
        <end position="219"/>
    </location>
</feature>
<feature type="strand" evidence="20">
    <location>
        <begin position="222"/>
        <end position="225"/>
    </location>
</feature>
<feature type="strand" evidence="20">
    <location>
        <begin position="227"/>
        <end position="234"/>
    </location>
</feature>
<feature type="helix" evidence="21">
    <location>
        <begin position="987"/>
        <end position="991"/>
    </location>
</feature>
<feature type="helix" evidence="21">
    <location>
        <begin position="994"/>
        <end position="998"/>
    </location>
</feature>
<feature type="strand" evidence="21">
    <location>
        <begin position="999"/>
        <end position="1004"/>
    </location>
</feature>
<feature type="strand" evidence="21">
    <location>
        <begin position="1006"/>
        <end position="1010"/>
    </location>
</feature>
<feature type="strand" evidence="21">
    <location>
        <begin position="1012"/>
        <end position="1018"/>
    </location>
</feature>
<feature type="turn" evidence="21">
    <location>
        <begin position="1019"/>
        <end position="1022"/>
    </location>
</feature>
<feature type="strand" evidence="21">
    <location>
        <begin position="1023"/>
        <end position="1032"/>
    </location>
</feature>
<feature type="strand" evidence="21">
    <location>
        <begin position="1039"/>
        <end position="1043"/>
    </location>
</feature>
<feature type="turn" evidence="21">
    <location>
        <begin position="1044"/>
        <end position="1046"/>
    </location>
</feature>
<feature type="strand" evidence="21">
    <location>
        <begin position="1047"/>
        <end position="1050"/>
    </location>
</feature>
<feature type="helix" evidence="21">
    <location>
        <begin position="1051"/>
        <end position="1056"/>
    </location>
</feature>
<feature type="strand" evidence="21">
    <location>
        <begin position="1067"/>
        <end position="1072"/>
    </location>
</feature>
<feature type="strand" evidence="21">
    <location>
        <begin position="1074"/>
        <end position="1082"/>
    </location>
</feature>
<feature type="helix" evidence="21">
    <location>
        <begin position="1090"/>
        <end position="1095"/>
    </location>
</feature>
<feature type="helix" evidence="21">
    <location>
        <begin position="1102"/>
        <end position="1121"/>
    </location>
</feature>
<feature type="helix" evidence="21">
    <location>
        <begin position="1131"/>
        <end position="1133"/>
    </location>
</feature>
<feature type="strand" evidence="21">
    <location>
        <begin position="1134"/>
        <end position="1136"/>
    </location>
</feature>
<feature type="strand" evidence="21">
    <location>
        <begin position="1142"/>
        <end position="1144"/>
    </location>
</feature>
<feature type="helix" evidence="21">
    <location>
        <begin position="1166"/>
        <end position="1168"/>
    </location>
</feature>
<feature type="helix" evidence="21">
    <location>
        <begin position="1171"/>
        <end position="1174"/>
    </location>
</feature>
<feature type="helix" evidence="21">
    <location>
        <begin position="1182"/>
        <end position="1198"/>
    </location>
</feature>
<feature type="helix" evidence="21">
    <location>
        <begin position="1206"/>
        <end position="1209"/>
    </location>
</feature>
<feature type="turn" evidence="21">
    <location>
        <begin position="1210"/>
        <end position="1212"/>
    </location>
</feature>
<feature type="helix" evidence="21">
    <location>
        <begin position="1222"/>
        <end position="1231"/>
    </location>
</feature>
<feature type="helix" evidence="21">
    <location>
        <begin position="1236"/>
        <end position="1238"/>
    </location>
</feature>
<feature type="helix" evidence="21">
    <location>
        <begin position="1242"/>
        <end position="1247"/>
    </location>
</feature>
<feature type="turn" evidence="21">
    <location>
        <begin position="1249"/>
        <end position="1252"/>
    </location>
</feature>
<feature type="helix" evidence="21">
    <location>
        <begin position="1257"/>
        <end position="1259"/>
    </location>
</feature>
<feature type="helix" evidence="21">
    <location>
        <begin position="1262"/>
        <end position="1265"/>
    </location>
</feature>
<comment type="function">
    <text evidence="7 8 10 11 12 13">Serine/threonine-protein kinase involved in energy homeostasis and protein translation. Phosphorylates EEF1A1, GYS1, PDX1 and RPS6. Probably plays a role under changing environmental conditions (oxygen, glucose, nutrition), rather than under standard conditions. Acts as a sensor involved in energy homeostasis: regulates glycogen synthase synthesis by mediating phosphorylation of GYS1, leading to GYS1 inactivation. May be involved in glucose-stimulated insulin production in pancreas and regulation of glucagon secretion by glucose in alpha cells; however such data require additional evidences. May play a role in regulation of protein translation by phosphorylating EEF1A1, leading to increase translation efficiency. May also participate in respiratory regulation.</text>
</comment>
<comment type="catalytic activity">
    <reaction>
        <text>L-seryl-[protein] + ATP = O-phospho-L-seryl-[protein] + ADP + H(+)</text>
        <dbReference type="Rhea" id="RHEA:17989"/>
        <dbReference type="Rhea" id="RHEA-COMP:9863"/>
        <dbReference type="Rhea" id="RHEA-COMP:11604"/>
        <dbReference type="ChEBI" id="CHEBI:15378"/>
        <dbReference type="ChEBI" id="CHEBI:29999"/>
        <dbReference type="ChEBI" id="CHEBI:30616"/>
        <dbReference type="ChEBI" id="CHEBI:83421"/>
        <dbReference type="ChEBI" id="CHEBI:456216"/>
        <dbReference type="EC" id="2.7.11.1"/>
    </reaction>
</comment>
<comment type="catalytic activity">
    <reaction>
        <text>L-threonyl-[protein] + ATP = O-phospho-L-threonyl-[protein] + ADP + H(+)</text>
        <dbReference type="Rhea" id="RHEA:46608"/>
        <dbReference type="Rhea" id="RHEA-COMP:11060"/>
        <dbReference type="Rhea" id="RHEA-COMP:11605"/>
        <dbReference type="ChEBI" id="CHEBI:15378"/>
        <dbReference type="ChEBI" id="CHEBI:30013"/>
        <dbReference type="ChEBI" id="CHEBI:30616"/>
        <dbReference type="ChEBI" id="CHEBI:61977"/>
        <dbReference type="ChEBI" id="CHEBI:456216"/>
        <dbReference type="EC" id="2.7.11.1"/>
    </reaction>
</comment>
<comment type="activity regulation">
    <text evidence="5 11 13">Protein kinase activity is inhibited by the first PAS domain: binding of an unidentified ligand desinhibits the protein kinase activity. May be activated by autophosphorylation on Thr-1161 and Thr-1165 (PubMed:11459942). The activating role of autophosphorylation at Thr-1161 is unclear: according to a report, autophosphorylation at Thr-1161 does not play a major role in activation (PubMed:20943661). Autophosphorylation is enhanced upon phosphatidylinositol monophosphate (phosphatidylinositol 4-phosphate) binding and inhibited upon phosphatidylinositol bi- and tri-phosphate binding. In contrast, phosphorylation of target proteins is inhibited upon all phosphatidylinositol-binding (phosphatidylinositol mono- bi- and tri-phosphate).</text>
</comment>
<comment type="interaction">
    <interactant intactId="EBI-1042651">
        <id>Q96RG2</id>
    </interactant>
    <interactant intactId="EBI-711855">
        <id>P16220</id>
        <label>CREB1</label>
    </interactant>
    <organismsDiffer>false</organismsDiffer>
    <experiments>2</experiments>
</comment>
<comment type="interaction">
    <interactant intactId="EBI-1042651">
        <id>Q96RG2</id>
    </interactant>
    <interactant intactId="EBI-351935">
        <id>P02545</id>
        <label>LMNA</label>
    </interactant>
    <organismsDiffer>false</organismsDiffer>
    <experiments>2</experiments>
</comment>
<comment type="interaction">
    <interactant intactId="EBI-1042651">
        <id>Q96RG2</id>
    </interactant>
    <interactant intactId="EBI-740559">
        <id>Q93100</id>
        <label>PHKB</label>
    </interactant>
    <organismsDiffer>false</organismsDiffer>
    <experiments>2</experiments>
</comment>
<comment type="interaction">
    <interactant intactId="EBI-1042651">
        <id>Q96RG2</id>
    </interactant>
    <interactant intactId="EBI-356625">
        <id>P62753</id>
        <label>RPS6</label>
    </interactant>
    <organismsDiffer>false</organismsDiffer>
    <experiments>3</experiments>
</comment>
<comment type="interaction">
    <interactant intactId="EBI-1042651">
        <id>Q96RG2</id>
    </interactant>
    <interactant intactId="EBI-8613624">
        <id>P07293</id>
        <label>CACNA1S</label>
    </interactant>
    <organismsDiffer>true</organismsDiffer>
    <experiments>2</experiments>
</comment>
<comment type="interaction">
    <interactant intactId="EBI-1042651">
        <id>Q96RG2</id>
    </interactant>
    <interactant intactId="EBI-8614455">
        <id>P02542</id>
        <label>DES</label>
    </interactant>
    <organismsDiffer>true</organismsDiffer>
    <experiments>2</experiments>
</comment>
<comment type="interaction">
    <interactant intactId="EBI-1042651">
        <id>Q96RG2</id>
    </interactant>
    <interactant intactId="EBI-907866">
        <id>Q28115</id>
        <label>GFAP</label>
    </interactant>
    <organismsDiffer>true</organismsDiffer>
    <experiments>2</experiments>
</comment>
<comment type="interaction">
    <interactant intactId="EBI-1042651">
        <id>Q96RG2</id>
    </interactant>
    <interactant intactId="EBI-8614386">
        <id>P02646</id>
        <label>TNNI3</label>
    </interactant>
    <organismsDiffer>true</organismsDiffer>
    <experiments>2</experiments>
</comment>
<comment type="interaction">
    <interactant intactId="EBI-1042651">
        <id>Q96RG2</id>
    </interactant>
    <interactant intactId="EBI-299269">
        <id>P20152</id>
        <label>Vim</label>
    </interactant>
    <organismsDiffer>true</organismsDiffer>
    <experiments>2</experiments>
</comment>
<comment type="subcellular location">
    <subcellularLocation>
        <location evidence="10">Cytoplasm</location>
    </subcellularLocation>
    <subcellularLocation>
        <location evidence="10">Nucleus</location>
    </subcellularLocation>
    <text>Localizes in the nucleus of testis germ cells and in the midpiece of sperm tails.</text>
</comment>
<comment type="alternative products">
    <event type="alternative splicing"/>
    <isoform>
        <id>Q96RG2-1</id>
        <name>1</name>
        <sequence type="displayed"/>
    </isoform>
    <isoform>
        <id>Q96RG2-2</id>
        <name>2</name>
        <sequence type="described" ref="VSP_009302"/>
    </isoform>
    <isoform>
        <id>Q96RG2-4</id>
        <name>3</name>
        <sequence type="described" ref="VSP_045543 VSP_045544"/>
    </isoform>
</comment>
<comment type="tissue specificity">
    <text>Ubiquitously expressed, with slightly higher expression in brain, prostate and testis. Reduced expression was found in placenta. Present in germ cells of testis and in the midpiece of sperm tails (at protein level).</text>
</comment>
<comment type="domain">
    <text evidence="13">The protein kinase domain mediates binding to phosphatidylinositol.</text>
</comment>
<comment type="PTM">
    <text evidence="5">Autophosphorylated on Thr-1161 and Thr-1165. Autophosphorylation is activated by phospholipids.</text>
</comment>
<comment type="similarity">
    <text evidence="17">Belongs to the protein kinase superfamily. CAMK Ser/Thr protein kinase family.</text>
</comment>
<comment type="sequence caution" evidence="17">
    <conflict type="erroneous initiation">
        <sequence resource="EMBL-CDS" id="BAA09484"/>
    </conflict>
    <text>Extended N-terminus.</text>
</comment>
<gene>
    <name type="primary">PASK</name>
    <name type="synonym">KIAA0135</name>
</gene>
<sequence>MEDGGLTAFEEDQRCLSQSLPLPVSAEGPAAQTTAEPSRSFSSAHRHLSRRNGLSRLCQSRTALSEDRWSSYCLSSLAAQNICTSKLHCPAAPEHTDPSEPRGSVSCCSLLRGLSSGWSSPLLPAPVCNPNKAIFTVDAKTTEILVANDKACGLLGYSSQDLIGQKLTQFFLRSDSDVVEALSEEHMEADGHAAVVFGTVVDIISRSGEKIPVSVWMKRMRQERRLCCVVVLEPVERVSTWVAFQSDGTVTSCDSLFAHLHGYVSGEDVAGQHITDLIPSVQLPPSGQHIPKNLKIQRSVGRARDGTTFPLSLKLKSQPSSEEATTGEAAPVSGYRASVWVFCTISGLITLLPDGTIHGINHSFALTLFGYGKTELLGKNITFLIPGFYSYMDLAYNSSLQLPDLASCLDVGNESGCGERTLDPWQGQDPAEGGQDPRINVVLAGGHVVPRDEIRKLMESQDIFTGTQTELIAGGQLLSCLSPQPAPGVDNVPEGSLPVHGEQALPKDQQITALGREEPVAIESPGQDLLGESRSEPVDVKPFASCEDSEAPVPAEDGGSDAGMCGLCQKAQLERMGVSGPSGSDLWAGAAVAKPQAKGQLAGGSLLMHCPCYGSEWGLWWRSQDLAPSPSGMAGLSFGTPTLDEPWLGVENDREELQTCLIKEQLSQLSLAGALDVPHAELVPTECQAVTAPVSSCDLGGRDLCGGCTGSSSACYALATDLPGGLEAVEAQEVDVNSFSWNLKELFFSDQTDQTSSNCSCATSELRETPSSLAVGSDPDVGSLQEQGSCVLDDRELLLLTGTCVDLGQGRRFRESCVGHDPTEPLEVCLVSSEHYAASDRESPGHVPSTLDAGPEDTCPSAEEPRLNVQVTSTPVIVMRGAAGLQREIQEGAYSGSCYHRDGLRLSIQFEVRRVELQGPTPLFCCWLVKDLLHSQRDSAARTRLFLASLPGSTHSTAAELTGPSLVEVLRARPWFEEPPKAVELEGLAACEGEYSQKYSTMSPLGSGAFGFVWTAVDKEKNKEVVVKFIKKEKVLEDCWIEDPKLGKVTLEIAILSRVEHANIIKVLDIFENQGFFQLVMEKHGSGLDLFAFIDRHPRLDEPLASYIFRQLVSAVGYLRLKDIIHRDIKDENIVIAEDFTIKLIDFGSAAYLERGKLFYTFCGTIEYCAPEVLMGNPYRGPELEMWSLGVTLYTLVFEENPFCELEETVEAAIHPPYLVSKELMSLVSGLLQPVPERRTTLEKLVTDPWVTQPVNLADYTWEEVFRVNKPESGVLSAASLEMGNRSLSDVAQAQELCGGPVPGEAPNGQGCLHPGDPRLLTS</sequence>
<name>PASK_HUMAN</name>
<dbReference type="EC" id="2.7.11.1"/>
<dbReference type="EMBL" id="AF387103">
    <property type="protein sequence ID" value="AAK69752.1"/>
    <property type="molecule type" value="mRNA"/>
</dbReference>
<dbReference type="EMBL" id="D50925">
    <property type="protein sequence ID" value="BAA09484.2"/>
    <property type="status" value="ALT_INIT"/>
    <property type="molecule type" value="mRNA"/>
</dbReference>
<dbReference type="EMBL" id="CR749231">
    <property type="protein sequence ID" value="CAH18087.1"/>
    <property type="molecule type" value="mRNA"/>
</dbReference>
<dbReference type="EMBL" id="AC005237">
    <property type="status" value="NOT_ANNOTATED_CDS"/>
    <property type="molecule type" value="Genomic_DNA"/>
</dbReference>
<dbReference type="EMBL" id="CH471063">
    <property type="protein sequence ID" value="EAW71238.1"/>
    <property type="molecule type" value="Genomic_DNA"/>
</dbReference>
<dbReference type="EMBL" id="BC043495">
    <property type="protein sequence ID" value="AAH43495.1"/>
    <property type="molecule type" value="mRNA"/>
</dbReference>
<dbReference type="EMBL" id="BC050565">
    <property type="protein sequence ID" value="AAH50565.1"/>
    <property type="molecule type" value="mRNA"/>
</dbReference>
<dbReference type="EMBL" id="BC063585">
    <property type="protein sequence ID" value="AAH63585.1"/>
    <property type="molecule type" value="mRNA"/>
</dbReference>
<dbReference type="EMBL" id="U79240">
    <property type="protein sequence ID" value="AAB50198.1"/>
    <property type="molecule type" value="mRNA"/>
</dbReference>
<dbReference type="CCDS" id="CCDS2545.1">
    <molecule id="Q96RG2-1"/>
</dbReference>
<dbReference type="CCDS" id="CCDS58758.1">
    <molecule id="Q96RG2-4"/>
</dbReference>
<dbReference type="CCDS" id="CCDS58759.1">
    <molecule id="Q96RG2-2"/>
</dbReference>
<dbReference type="PIR" id="T17211">
    <property type="entry name" value="T17211"/>
</dbReference>
<dbReference type="RefSeq" id="NP_001239048.1">
    <molecule id="Q96RG2-2"/>
    <property type="nucleotide sequence ID" value="NM_001252119.2"/>
</dbReference>
<dbReference type="RefSeq" id="NP_001239049.1">
    <molecule id="Q96RG2-1"/>
    <property type="nucleotide sequence ID" value="NM_001252120.2"/>
</dbReference>
<dbReference type="RefSeq" id="NP_001239051.1">
    <property type="nucleotide sequence ID" value="NM_001252122.1"/>
</dbReference>
<dbReference type="RefSeq" id="NP_001239053.1">
    <molecule id="Q96RG2-4"/>
    <property type="nucleotide sequence ID" value="NM_001252124.2"/>
</dbReference>
<dbReference type="RefSeq" id="NP_055963.2">
    <molecule id="Q96RG2-1"/>
    <property type="nucleotide sequence ID" value="NM_015148.3"/>
</dbReference>
<dbReference type="RefSeq" id="XP_011509130.1">
    <property type="nucleotide sequence ID" value="XM_011510828.1"/>
</dbReference>
<dbReference type="RefSeq" id="XP_011509131.1">
    <property type="nucleotide sequence ID" value="XM_011510829.1"/>
</dbReference>
<dbReference type="RefSeq" id="XP_011509132.1">
    <property type="nucleotide sequence ID" value="XM_011510830.1"/>
</dbReference>
<dbReference type="RefSeq" id="XP_016859124.1">
    <property type="nucleotide sequence ID" value="XM_017003635.1"/>
</dbReference>
<dbReference type="RefSeq" id="XP_016859125.1">
    <property type="nucleotide sequence ID" value="XM_017003636.1"/>
</dbReference>
<dbReference type="PDB" id="1LL8">
    <property type="method" value="NMR"/>
    <property type="chains" value="A=131-237"/>
</dbReference>
<dbReference type="PDB" id="3DLS">
    <property type="method" value="X-ray"/>
    <property type="resolution" value="2.30 A"/>
    <property type="chains" value="A/B/C/D/E/F=977-1300"/>
</dbReference>
<dbReference type="PDBsum" id="1LL8"/>
<dbReference type="PDBsum" id="3DLS"/>
<dbReference type="BMRB" id="Q96RG2"/>
<dbReference type="SMR" id="Q96RG2"/>
<dbReference type="BioGRID" id="116790">
    <property type="interactions" value="165"/>
</dbReference>
<dbReference type="FunCoup" id="Q96RG2">
    <property type="interactions" value="3778"/>
</dbReference>
<dbReference type="IntAct" id="Q96RG2">
    <property type="interactions" value="128"/>
</dbReference>
<dbReference type="MINT" id="Q96RG2"/>
<dbReference type="STRING" id="9606.ENSP00000351475"/>
<dbReference type="BindingDB" id="Q96RG2"/>
<dbReference type="ChEMBL" id="CHEMBL6054"/>
<dbReference type="MoonDB" id="Q96RG2">
    <property type="type" value="Predicted"/>
</dbReference>
<dbReference type="GlyGen" id="Q96RG2">
    <property type="glycosylation" value="1 site, 1 O-linked glycan (1 site)"/>
</dbReference>
<dbReference type="iPTMnet" id="Q96RG2"/>
<dbReference type="PhosphoSitePlus" id="Q96RG2"/>
<dbReference type="BioMuta" id="PASK"/>
<dbReference type="DMDM" id="116242701"/>
<dbReference type="jPOST" id="Q96RG2"/>
<dbReference type="MassIVE" id="Q96RG2"/>
<dbReference type="PaxDb" id="9606-ENSP00000351475"/>
<dbReference type="PeptideAtlas" id="Q96RG2"/>
<dbReference type="ProteomicsDB" id="33919"/>
<dbReference type="ProteomicsDB" id="77959">
    <molecule id="Q96RG2-1"/>
</dbReference>
<dbReference type="ProteomicsDB" id="77960">
    <molecule id="Q96RG2-2"/>
</dbReference>
<dbReference type="Pumba" id="Q96RG2"/>
<dbReference type="Antibodypedia" id="20301">
    <property type="antibodies" value="213 antibodies from 29 providers"/>
</dbReference>
<dbReference type="DNASU" id="23178"/>
<dbReference type="Ensembl" id="ENST00000234040.9">
    <molecule id="Q96RG2-1"/>
    <property type="protein sequence ID" value="ENSP00000234040.5"/>
    <property type="gene ID" value="ENSG00000115687.14"/>
</dbReference>
<dbReference type="Ensembl" id="ENST00000358649.8">
    <molecule id="Q96RG2-2"/>
    <property type="protein sequence ID" value="ENSP00000351475.4"/>
    <property type="gene ID" value="ENSG00000115687.14"/>
</dbReference>
<dbReference type="Ensembl" id="ENST00000403638.7">
    <molecule id="Q96RG2-4"/>
    <property type="protein sequence ID" value="ENSP00000384438.3"/>
    <property type="gene ID" value="ENSG00000115687.14"/>
</dbReference>
<dbReference type="Ensembl" id="ENST00000405260.5">
    <molecule id="Q96RG2-1"/>
    <property type="protein sequence ID" value="ENSP00000384016.1"/>
    <property type="gene ID" value="ENSG00000115687.14"/>
</dbReference>
<dbReference type="Ensembl" id="ENST00000544142.5">
    <molecule id="Q96RG2-1"/>
    <property type="protein sequence ID" value="ENSP00000441374.2"/>
    <property type="gene ID" value="ENSG00000115687.14"/>
</dbReference>
<dbReference type="GeneID" id="23178"/>
<dbReference type="KEGG" id="hsa:23178"/>
<dbReference type="MANE-Select" id="ENST00000234040.9">
    <property type="protein sequence ID" value="ENSP00000234040.5"/>
    <property type="RefSeq nucleotide sequence ID" value="NM_015148.4"/>
    <property type="RefSeq protein sequence ID" value="NP_055963.2"/>
</dbReference>
<dbReference type="UCSC" id="uc002wao.2">
    <molecule id="Q96RG2-1"/>
    <property type="organism name" value="human"/>
</dbReference>
<dbReference type="AGR" id="HGNC:17270"/>
<dbReference type="CTD" id="23178"/>
<dbReference type="DisGeNET" id="23178"/>
<dbReference type="GeneCards" id="PASK"/>
<dbReference type="HGNC" id="HGNC:17270">
    <property type="gene designation" value="PASK"/>
</dbReference>
<dbReference type="HPA" id="ENSG00000115687">
    <property type="expression patterns" value="Tissue enhanced (lymphoid)"/>
</dbReference>
<dbReference type="MalaCards" id="PASK"/>
<dbReference type="MIM" id="607505">
    <property type="type" value="gene"/>
</dbReference>
<dbReference type="neXtProt" id="NX_Q96RG2"/>
<dbReference type="OpenTargets" id="ENSG00000115687"/>
<dbReference type="PharmGKB" id="PA32953"/>
<dbReference type="VEuPathDB" id="HostDB:ENSG00000115687"/>
<dbReference type="eggNOG" id="KOG0583">
    <property type="taxonomic scope" value="Eukaryota"/>
</dbReference>
<dbReference type="eggNOG" id="KOG1152">
    <property type="taxonomic scope" value="Eukaryota"/>
</dbReference>
<dbReference type="GeneTree" id="ENSGT00940000159035"/>
<dbReference type="HOGENOM" id="CLU_006086_0_0_1"/>
<dbReference type="InParanoid" id="Q96RG2"/>
<dbReference type="OMA" id="AFIDHHP"/>
<dbReference type="OrthoDB" id="10252171at2759"/>
<dbReference type="PAN-GO" id="Q96RG2">
    <property type="GO annotations" value="7 GO annotations based on evolutionary models"/>
</dbReference>
<dbReference type="PhylomeDB" id="Q96RG2"/>
<dbReference type="TreeFam" id="TF323242"/>
<dbReference type="PathwayCommons" id="Q96RG2"/>
<dbReference type="SignaLink" id="Q96RG2"/>
<dbReference type="SIGNOR" id="Q96RG2"/>
<dbReference type="BioGRID-ORCS" id="23178">
    <property type="hits" value="13 hits in 1186 CRISPR screens"/>
</dbReference>
<dbReference type="ChiTaRS" id="PASK">
    <property type="organism name" value="human"/>
</dbReference>
<dbReference type="EvolutionaryTrace" id="Q96RG2"/>
<dbReference type="GeneWiki" id="PASK"/>
<dbReference type="GenomeRNAi" id="23178"/>
<dbReference type="Pharos" id="Q96RG2">
    <property type="development level" value="Tchem"/>
</dbReference>
<dbReference type="PRO" id="PR:Q96RG2"/>
<dbReference type="Proteomes" id="UP000005640">
    <property type="component" value="Chromosome 2"/>
</dbReference>
<dbReference type="RNAct" id="Q96RG2">
    <property type="molecule type" value="protein"/>
</dbReference>
<dbReference type="Bgee" id="ENSG00000115687">
    <property type="expression patterns" value="Expressed in right uterine tube and 125 other cell types or tissues"/>
</dbReference>
<dbReference type="ExpressionAtlas" id="Q96RG2">
    <property type="expression patterns" value="baseline and differential"/>
</dbReference>
<dbReference type="GO" id="GO:0005737">
    <property type="term" value="C:cytoplasm"/>
    <property type="evidence" value="ECO:0000314"/>
    <property type="project" value="UniProtKB"/>
</dbReference>
<dbReference type="GO" id="GO:0005829">
    <property type="term" value="C:cytosol"/>
    <property type="evidence" value="ECO:0000314"/>
    <property type="project" value="HPA"/>
</dbReference>
<dbReference type="GO" id="GO:0005634">
    <property type="term" value="C:nucleus"/>
    <property type="evidence" value="ECO:0000314"/>
    <property type="project" value="UniProtKB"/>
</dbReference>
<dbReference type="GO" id="GO:0005524">
    <property type="term" value="F:ATP binding"/>
    <property type="evidence" value="ECO:0007669"/>
    <property type="project" value="UniProtKB-KW"/>
</dbReference>
<dbReference type="GO" id="GO:0035091">
    <property type="term" value="F:phosphatidylinositol binding"/>
    <property type="evidence" value="ECO:0000314"/>
    <property type="project" value="UniProtKB"/>
</dbReference>
<dbReference type="GO" id="GO:0106310">
    <property type="term" value="F:protein serine kinase activity"/>
    <property type="evidence" value="ECO:0007669"/>
    <property type="project" value="RHEA"/>
</dbReference>
<dbReference type="GO" id="GO:0004674">
    <property type="term" value="F:protein serine/threonine kinase activity"/>
    <property type="evidence" value="ECO:0000314"/>
    <property type="project" value="UniProtKB"/>
</dbReference>
<dbReference type="GO" id="GO:0097009">
    <property type="term" value="P:energy homeostasis"/>
    <property type="evidence" value="ECO:0000250"/>
    <property type="project" value="UniProtKB"/>
</dbReference>
<dbReference type="GO" id="GO:0035556">
    <property type="term" value="P:intracellular signal transduction"/>
    <property type="evidence" value="ECO:0000318"/>
    <property type="project" value="GO_Central"/>
</dbReference>
<dbReference type="GO" id="GO:0045719">
    <property type="term" value="P:negative regulation of glycogen biosynthetic process"/>
    <property type="evidence" value="ECO:0000314"/>
    <property type="project" value="UniProtKB"/>
</dbReference>
<dbReference type="GO" id="GO:0045727">
    <property type="term" value="P:positive regulation of translation"/>
    <property type="evidence" value="ECO:0000304"/>
    <property type="project" value="UniProtKB"/>
</dbReference>
<dbReference type="GO" id="GO:0046777">
    <property type="term" value="P:protein autophosphorylation"/>
    <property type="evidence" value="ECO:0000314"/>
    <property type="project" value="UniProtKB"/>
</dbReference>
<dbReference type="GO" id="GO:0006468">
    <property type="term" value="P:protein phosphorylation"/>
    <property type="evidence" value="ECO:0000314"/>
    <property type="project" value="UniProtKB"/>
</dbReference>
<dbReference type="GO" id="GO:0070092">
    <property type="term" value="P:regulation of glucagon secretion"/>
    <property type="evidence" value="ECO:0000250"/>
    <property type="project" value="UniProtKB"/>
</dbReference>
<dbReference type="GO" id="GO:0043576">
    <property type="term" value="P:regulation of respiratory gaseous exchange"/>
    <property type="evidence" value="ECO:0000250"/>
    <property type="project" value="UniProtKB"/>
</dbReference>
<dbReference type="CDD" id="cd00130">
    <property type="entry name" value="PAS"/>
    <property type="match status" value="2"/>
</dbReference>
<dbReference type="CDD" id="cd14004">
    <property type="entry name" value="STKc_PASK"/>
    <property type="match status" value="1"/>
</dbReference>
<dbReference type="FunFam" id="3.30.450.20:FF:000059">
    <property type="entry name" value="PAS domain containing serine/threonine kinase"/>
    <property type="match status" value="1"/>
</dbReference>
<dbReference type="FunFam" id="1.10.510.10:FF:000351">
    <property type="entry name" value="PAS domain-containing serine/threonine-protein kinase"/>
    <property type="match status" value="1"/>
</dbReference>
<dbReference type="FunFam" id="3.30.200.20:FF:000346">
    <property type="entry name" value="PAS domain-containing serine/threonine-protein kinase"/>
    <property type="match status" value="1"/>
</dbReference>
<dbReference type="Gene3D" id="3.30.450.20">
    <property type="entry name" value="PAS domain"/>
    <property type="match status" value="1"/>
</dbReference>
<dbReference type="Gene3D" id="3.30.200.20">
    <property type="entry name" value="Phosphorylase Kinase, domain 1"/>
    <property type="match status" value="1"/>
</dbReference>
<dbReference type="Gene3D" id="1.10.510.10">
    <property type="entry name" value="Transferase(Phosphotransferase) domain 1"/>
    <property type="match status" value="1"/>
</dbReference>
<dbReference type="InterPro" id="IPR011009">
    <property type="entry name" value="Kinase-like_dom_sf"/>
</dbReference>
<dbReference type="InterPro" id="IPR000014">
    <property type="entry name" value="PAS"/>
</dbReference>
<dbReference type="InterPro" id="IPR035965">
    <property type="entry name" value="PAS-like_dom_sf"/>
</dbReference>
<dbReference type="InterPro" id="IPR000719">
    <property type="entry name" value="Prot_kinase_dom"/>
</dbReference>
<dbReference type="InterPro" id="IPR017441">
    <property type="entry name" value="Protein_kinase_ATP_BS"/>
</dbReference>
<dbReference type="InterPro" id="IPR008271">
    <property type="entry name" value="Ser/Thr_kinase_AS"/>
</dbReference>
<dbReference type="NCBIfam" id="TIGR00229">
    <property type="entry name" value="sensory_box"/>
    <property type="match status" value="1"/>
</dbReference>
<dbReference type="PANTHER" id="PTHR24346">
    <property type="entry name" value="MAP/MICROTUBULE AFFINITY-REGULATING KINASE"/>
    <property type="match status" value="1"/>
</dbReference>
<dbReference type="PANTHER" id="PTHR24346:SF51">
    <property type="entry name" value="PAS DOMAIN-CONTAINING SERINE_THREONINE-PROTEIN KINASE"/>
    <property type="match status" value="1"/>
</dbReference>
<dbReference type="Pfam" id="PF13426">
    <property type="entry name" value="PAS_9"/>
    <property type="match status" value="2"/>
</dbReference>
<dbReference type="Pfam" id="PF00069">
    <property type="entry name" value="Pkinase"/>
    <property type="match status" value="1"/>
</dbReference>
<dbReference type="SMART" id="SM00091">
    <property type="entry name" value="PAS"/>
    <property type="match status" value="2"/>
</dbReference>
<dbReference type="SMART" id="SM00220">
    <property type="entry name" value="S_TKc"/>
    <property type="match status" value="1"/>
</dbReference>
<dbReference type="SUPFAM" id="SSF56112">
    <property type="entry name" value="Protein kinase-like (PK-like)"/>
    <property type="match status" value="1"/>
</dbReference>
<dbReference type="SUPFAM" id="SSF55785">
    <property type="entry name" value="PYP-like sensor domain (PAS domain)"/>
    <property type="match status" value="1"/>
</dbReference>
<dbReference type="PROSITE" id="PS50112">
    <property type="entry name" value="PAS"/>
    <property type="match status" value="1"/>
</dbReference>
<dbReference type="PROSITE" id="PS00107">
    <property type="entry name" value="PROTEIN_KINASE_ATP"/>
    <property type="match status" value="1"/>
</dbReference>
<dbReference type="PROSITE" id="PS50011">
    <property type="entry name" value="PROTEIN_KINASE_DOM"/>
    <property type="match status" value="1"/>
</dbReference>
<dbReference type="PROSITE" id="PS00108">
    <property type="entry name" value="PROTEIN_KINASE_ST"/>
    <property type="match status" value="1"/>
</dbReference>
<accession>Q96RG2</accession>
<accession>G5E9F1</accession>
<accession>Q05BE4</accession>
<accession>Q68DY3</accession>
<accession>Q6GSJ5</accession>
<accession>Q86XH6</accession>
<accession>Q99763</accession>
<accession>Q9UFR7</accession>